<proteinExistence type="inferred from homology"/>
<keyword id="KW-0067">ATP-binding</keyword>
<keyword id="KW-1003">Cell membrane</keyword>
<keyword id="KW-0472">Membrane</keyword>
<keyword id="KW-0547">Nucleotide-binding</keyword>
<keyword id="KW-0918">Phosphonate transport</keyword>
<keyword id="KW-1185">Reference proteome</keyword>
<keyword id="KW-1278">Translocase</keyword>
<keyword id="KW-0813">Transport</keyword>
<sequence length="257" mass="28436">MIEFRNVSKVYPNGTKGLNNINLKIQKGEFVVMVGLSGAGKSTLLRSVNRLHEITEGEIMIEGESITAAKGKGLRRMRRDIGMIFQSFNLVKRSTVLKNVLAGRVGYHSTLRTTLGLFPKEDLELAFQSLKRVNILEKAYARADELSGGQQQRVSIARALAQEAKIILADEPVASLDPLTTKQVLEDLKKINEDFGITTIVNLHSIDLARQYATRIIGLHAGEIVFDGLVEEATDEKFAEIYGDVVQKSELLEVAVK</sequence>
<reference key="1">
    <citation type="journal article" date="2003" name="Nature">
        <title>The genome sequence of Bacillus anthracis Ames and comparison to closely related bacteria.</title>
        <authorList>
            <person name="Read T.D."/>
            <person name="Peterson S.N."/>
            <person name="Tourasse N.J."/>
            <person name="Baillie L.W."/>
            <person name="Paulsen I.T."/>
            <person name="Nelson K.E."/>
            <person name="Tettelin H."/>
            <person name="Fouts D.E."/>
            <person name="Eisen J.A."/>
            <person name="Gill S.R."/>
            <person name="Holtzapple E.K."/>
            <person name="Okstad O.A."/>
            <person name="Helgason E."/>
            <person name="Rilstone J."/>
            <person name="Wu M."/>
            <person name="Kolonay J.F."/>
            <person name="Beanan M.J."/>
            <person name="Dodson R.J."/>
            <person name="Brinkac L.M."/>
            <person name="Gwinn M.L."/>
            <person name="DeBoy R.T."/>
            <person name="Madpu R."/>
            <person name="Daugherty S.C."/>
            <person name="Durkin A.S."/>
            <person name="Haft D.H."/>
            <person name="Nelson W.C."/>
            <person name="Peterson J.D."/>
            <person name="Pop M."/>
            <person name="Khouri H.M."/>
            <person name="Radune D."/>
            <person name="Benton J.L."/>
            <person name="Mahamoud Y."/>
            <person name="Jiang L."/>
            <person name="Hance I.R."/>
            <person name="Weidman J.F."/>
            <person name="Berry K.J."/>
            <person name="Plaut R.D."/>
            <person name="Wolf A.M."/>
            <person name="Watkins K.L."/>
            <person name="Nierman W.C."/>
            <person name="Hazen A."/>
            <person name="Cline R.T."/>
            <person name="Redmond C."/>
            <person name="Thwaite J.E."/>
            <person name="White O."/>
            <person name="Salzberg S.L."/>
            <person name="Thomason B."/>
            <person name="Friedlander A.M."/>
            <person name="Koehler T.M."/>
            <person name="Hanna P.C."/>
            <person name="Kolstoe A.-B."/>
            <person name="Fraser C.M."/>
        </authorList>
    </citation>
    <scope>NUCLEOTIDE SEQUENCE [LARGE SCALE GENOMIC DNA]</scope>
    <source>
        <strain>Ames / isolate Porton</strain>
    </source>
</reference>
<reference key="2">
    <citation type="journal article" date="2009" name="J. Bacteriol.">
        <title>The complete genome sequence of Bacillus anthracis Ames 'Ancestor'.</title>
        <authorList>
            <person name="Ravel J."/>
            <person name="Jiang L."/>
            <person name="Stanley S.T."/>
            <person name="Wilson M.R."/>
            <person name="Decker R.S."/>
            <person name="Read T.D."/>
            <person name="Worsham P."/>
            <person name="Keim P.S."/>
            <person name="Salzberg S.L."/>
            <person name="Fraser-Liggett C.M."/>
            <person name="Rasko D.A."/>
        </authorList>
    </citation>
    <scope>NUCLEOTIDE SEQUENCE [LARGE SCALE GENOMIC DNA]</scope>
    <source>
        <strain>Ames ancestor</strain>
    </source>
</reference>
<reference key="3">
    <citation type="submission" date="2004-01" db="EMBL/GenBank/DDBJ databases">
        <title>Complete genome sequence of Bacillus anthracis Sterne.</title>
        <authorList>
            <person name="Brettin T.S."/>
            <person name="Bruce D."/>
            <person name="Challacombe J.F."/>
            <person name="Gilna P."/>
            <person name="Han C."/>
            <person name="Hill K."/>
            <person name="Hitchcock P."/>
            <person name="Jackson P."/>
            <person name="Keim P."/>
            <person name="Longmire J."/>
            <person name="Lucas S."/>
            <person name="Okinaka R."/>
            <person name="Richardson P."/>
            <person name="Rubin E."/>
            <person name="Tice H."/>
        </authorList>
    </citation>
    <scope>NUCLEOTIDE SEQUENCE [LARGE SCALE GENOMIC DNA]</scope>
    <source>
        <strain>Sterne</strain>
    </source>
</reference>
<organism>
    <name type="scientific">Bacillus anthracis</name>
    <dbReference type="NCBI Taxonomy" id="1392"/>
    <lineage>
        <taxon>Bacteria</taxon>
        <taxon>Bacillati</taxon>
        <taxon>Bacillota</taxon>
        <taxon>Bacilli</taxon>
        <taxon>Bacillales</taxon>
        <taxon>Bacillaceae</taxon>
        <taxon>Bacillus</taxon>
        <taxon>Bacillus cereus group</taxon>
    </lineage>
</organism>
<feature type="chain" id="PRO_0000092688" description="Phosphonates import ATP-binding protein PhnC">
    <location>
        <begin position="1"/>
        <end position="257"/>
    </location>
</feature>
<feature type="domain" description="ABC transporter" evidence="1">
    <location>
        <begin position="2"/>
        <end position="246"/>
    </location>
</feature>
<feature type="binding site" evidence="1">
    <location>
        <begin position="35"/>
        <end position="42"/>
    </location>
    <ligand>
        <name>ATP</name>
        <dbReference type="ChEBI" id="CHEBI:30616"/>
    </ligand>
</feature>
<accession>Q81Y10</accession>
<accession>Q6HVA9</accession>
<accession>Q6KPH7</accession>
<dbReference type="EC" id="7.3.2.2" evidence="1"/>
<dbReference type="EMBL" id="AE016879">
    <property type="protein sequence ID" value="AAP27496.1"/>
    <property type="molecule type" value="Genomic_DNA"/>
</dbReference>
<dbReference type="EMBL" id="AE017334">
    <property type="protein sequence ID" value="AAT32862.2"/>
    <property type="molecule type" value="Genomic_DNA"/>
</dbReference>
<dbReference type="EMBL" id="AE017225">
    <property type="protein sequence ID" value="AAT55780.1"/>
    <property type="molecule type" value="Genomic_DNA"/>
</dbReference>
<dbReference type="RefSeq" id="NP_846010.1">
    <property type="nucleotide sequence ID" value="NC_003997.3"/>
</dbReference>
<dbReference type="RefSeq" id="WP_000569256.1">
    <property type="nucleotide sequence ID" value="NZ_WXXJ01000029.1"/>
</dbReference>
<dbReference type="RefSeq" id="YP_029729.1">
    <property type="nucleotide sequence ID" value="NC_005945.1"/>
</dbReference>
<dbReference type="SMR" id="Q81Y10"/>
<dbReference type="STRING" id="261594.GBAA_3749"/>
<dbReference type="DNASU" id="1087143"/>
<dbReference type="GeneID" id="45023466"/>
<dbReference type="KEGG" id="ban:BA_3749"/>
<dbReference type="KEGG" id="banh:HYU01_18325"/>
<dbReference type="KEGG" id="bar:GBAA_3749"/>
<dbReference type="KEGG" id="bat:BAS3474"/>
<dbReference type="PATRIC" id="fig|198094.11.peg.3719"/>
<dbReference type="eggNOG" id="COG3638">
    <property type="taxonomic scope" value="Bacteria"/>
</dbReference>
<dbReference type="HOGENOM" id="CLU_000604_1_22_9"/>
<dbReference type="OMA" id="RYCPRAV"/>
<dbReference type="OrthoDB" id="9802264at2"/>
<dbReference type="Proteomes" id="UP000000427">
    <property type="component" value="Chromosome"/>
</dbReference>
<dbReference type="Proteomes" id="UP000000594">
    <property type="component" value="Chromosome"/>
</dbReference>
<dbReference type="GO" id="GO:0005886">
    <property type="term" value="C:plasma membrane"/>
    <property type="evidence" value="ECO:0007669"/>
    <property type="project" value="UniProtKB-SubCell"/>
</dbReference>
<dbReference type="GO" id="GO:0015416">
    <property type="term" value="F:ABC-type phosphonate transporter activity"/>
    <property type="evidence" value="ECO:0007669"/>
    <property type="project" value="UniProtKB-EC"/>
</dbReference>
<dbReference type="GO" id="GO:0005524">
    <property type="term" value="F:ATP binding"/>
    <property type="evidence" value="ECO:0007669"/>
    <property type="project" value="UniProtKB-KW"/>
</dbReference>
<dbReference type="GO" id="GO:0016887">
    <property type="term" value="F:ATP hydrolysis activity"/>
    <property type="evidence" value="ECO:0007669"/>
    <property type="project" value="InterPro"/>
</dbReference>
<dbReference type="CDD" id="cd03256">
    <property type="entry name" value="ABC_PhnC_transporter"/>
    <property type="match status" value="1"/>
</dbReference>
<dbReference type="FunFam" id="3.40.50.300:FF:001482">
    <property type="entry name" value="Phosphonates import ATP-binding protein PhnC"/>
    <property type="match status" value="1"/>
</dbReference>
<dbReference type="Gene3D" id="3.40.50.300">
    <property type="entry name" value="P-loop containing nucleotide triphosphate hydrolases"/>
    <property type="match status" value="1"/>
</dbReference>
<dbReference type="InterPro" id="IPR003593">
    <property type="entry name" value="AAA+_ATPase"/>
</dbReference>
<dbReference type="InterPro" id="IPR003439">
    <property type="entry name" value="ABC_transporter-like_ATP-bd"/>
</dbReference>
<dbReference type="InterPro" id="IPR017871">
    <property type="entry name" value="ABC_transporter-like_CS"/>
</dbReference>
<dbReference type="InterPro" id="IPR012693">
    <property type="entry name" value="ABC_transpr_PhnC"/>
</dbReference>
<dbReference type="InterPro" id="IPR050086">
    <property type="entry name" value="MetN_ABC_transporter-like"/>
</dbReference>
<dbReference type="InterPro" id="IPR027417">
    <property type="entry name" value="P-loop_NTPase"/>
</dbReference>
<dbReference type="NCBIfam" id="TIGR02315">
    <property type="entry name" value="ABC_phnC"/>
    <property type="match status" value="1"/>
</dbReference>
<dbReference type="PANTHER" id="PTHR43166">
    <property type="entry name" value="AMINO ACID IMPORT ATP-BINDING PROTEIN"/>
    <property type="match status" value="1"/>
</dbReference>
<dbReference type="PANTHER" id="PTHR43166:SF6">
    <property type="entry name" value="PHOSPHONATES IMPORT ATP-BINDING PROTEIN PHNC"/>
    <property type="match status" value="1"/>
</dbReference>
<dbReference type="Pfam" id="PF00005">
    <property type="entry name" value="ABC_tran"/>
    <property type="match status" value="1"/>
</dbReference>
<dbReference type="SMART" id="SM00382">
    <property type="entry name" value="AAA"/>
    <property type="match status" value="1"/>
</dbReference>
<dbReference type="SUPFAM" id="SSF52540">
    <property type="entry name" value="P-loop containing nucleoside triphosphate hydrolases"/>
    <property type="match status" value="1"/>
</dbReference>
<dbReference type="PROSITE" id="PS00211">
    <property type="entry name" value="ABC_TRANSPORTER_1"/>
    <property type="match status" value="1"/>
</dbReference>
<dbReference type="PROSITE" id="PS50893">
    <property type="entry name" value="ABC_TRANSPORTER_2"/>
    <property type="match status" value="1"/>
</dbReference>
<dbReference type="PROSITE" id="PS51249">
    <property type="entry name" value="PHNC"/>
    <property type="match status" value="1"/>
</dbReference>
<protein>
    <recommendedName>
        <fullName evidence="1">Phosphonates import ATP-binding protein PhnC</fullName>
        <ecNumber evidence="1">7.3.2.2</ecNumber>
    </recommendedName>
</protein>
<name>PHNC_BACAN</name>
<comment type="function">
    <text evidence="1">Part of the ABC transporter complex PhnCDE involved in phosphonates import. Responsible for energy coupling to the transport system.</text>
</comment>
<comment type="catalytic activity">
    <reaction evidence="1">
        <text>phosphonate(out) + ATP + H2O = phosphonate(in) + ADP + phosphate + H(+)</text>
        <dbReference type="Rhea" id="RHEA:18065"/>
        <dbReference type="ChEBI" id="CHEBI:15377"/>
        <dbReference type="ChEBI" id="CHEBI:15378"/>
        <dbReference type="ChEBI" id="CHEBI:16215"/>
        <dbReference type="ChEBI" id="CHEBI:30616"/>
        <dbReference type="ChEBI" id="CHEBI:43474"/>
        <dbReference type="ChEBI" id="CHEBI:456216"/>
        <dbReference type="EC" id="7.3.2.2"/>
    </reaction>
</comment>
<comment type="subunit">
    <text evidence="1">The complex is composed of two ATP-binding proteins (PhnC), two transmembrane proteins (PhnE) and a solute-binding protein (PhnD).</text>
</comment>
<comment type="subcellular location">
    <subcellularLocation>
        <location evidence="1">Cell membrane</location>
        <topology evidence="1">Peripheral membrane protein</topology>
    </subcellularLocation>
</comment>
<comment type="similarity">
    <text evidence="1">Belongs to the ABC transporter superfamily. Phosphonates importer (TC 3.A.1.9.1) family.</text>
</comment>
<evidence type="ECO:0000255" key="1">
    <source>
        <dbReference type="HAMAP-Rule" id="MF_01713"/>
    </source>
</evidence>
<gene>
    <name evidence="1" type="primary">phnC</name>
    <name type="ordered locus">BA_3749</name>
    <name type="ordered locus">GBAA_3749</name>
    <name type="ordered locus">BAS3474</name>
</gene>